<organism>
    <name type="scientific">Thalassiosira pseudonana</name>
    <name type="common">Marine diatom</name>
    <name type="synonym">Cyclotella nana</name>
    <dbReference type="NCBI Taxonomy" id="35128"/>
    <lineage>
        <taxon>Eukaryota</taxon>
        <taxon>Sar</taxon>
        <taxon>Stramenopiles</taxon>
        <taxon>Ochrophyta</taxon>
        <taxon>Bacillariophyta</taxon>
        <taxon>Coscinodiscophyceae</taxon>
        <taxon>Thalassiosirophycidae</taxon>
        <taxon>Thalassiosirales</taxon>
        <taxon>Thalassiosiraceae</taxon>
        <taxon>Thalassiosira</taxon>
    </lineage>
</organism>
<reference key="1">
    <citation type="journal article" date="2007" name="Mol. Genet. Genomics">
        <title>Chloroplast genomes of the diatoms Phaeodactylum tricornutum and Thalassiosira pseudonana: comparison with other plastid genomes of the red lineage.</title>
        <authorList>
            <person name="Oudot-Le Secq M.-P."/>
            <person name="Grimwood J."/>
            <person name="Shapiro H."/>
            <person name="Armbrust E.V."/>
            <person name="Bowler C."/>
            <person name="Green B.R."/>
        </authorList>
    </citation>
    <scope>NUCLEOTIDE SEQUENCE [LARGE SCALE GENOMIC DNA]</scope>
    <source>
        <strain>CCMP1335 / NEPCC58 / CCAP 1085/12</strain>
    </source>
</reference>
<keyword id="KW-0150">Chloroplast</keyword>
<keyword id="KW-0934">Plastid</keyword>
<keyword id="KW-0687">Ribonucleoprotein</keyword>
<keyword id="KW-0689">Ribosomal protein</keyword>
<keyword id="KW-0694">RNA-binding</keyword>
<keyword id="KW-0699">rRNA-binding</keyword>
<sequence length="156" mass="17730">MSRRNISKKRFPKADPTYNSYLVSLLVTRILKSGKKNLAQNIVNSAFDIIKSKTNEDPLVIFEKAIRNASPVVEVKARRIGGSTYQVPIEVSSFRATNLALRWIIQYSRQRVGRTMSIKLASEIIDTANDIGNTIKKKEETHKMADANKAFAHFRY</sequence>
<protein>
    <recommendedName>
        <fullName evidence="2">Small ribosomal subunit protein uS7c</fullName>
    </recommendedName>
    <alternativeName>
        <fullName>30S ribosomal protein S7, chloroplastic</fullName>
    </alternativeName>
</protein>
<accession>A0T0Z9</accession>
<geneLocation type="chloroplast"/>
<name>RR7_THAPS</name>
<gene>
    <name type="primary">rps7</name>
</gene>
<evidence type="ECO:0000250" key="1"/>
<evidence type="ECO:0000305" key="2"/>
<dbReference type="EMBL" id="EF067921">
    <property type="protein sequence ID" value="ABK20834.1"/>
    <property type="molecule type" value="Genomic_DNA"/>
</dbReference>
<dbReference type="RefSeq" id="YP_874611.1">
    <property type="nucleotide sequence ID" value="NC_008589.1"/>
</dbReference>
<dbReference type="SMR" id="A0T0Z9"/>
<dbReference type="STRING" id="35128.A0T0Z9"/>
<dbReference type="GeneID" id="4524811"/>
<dbReference type="InParanoid" id="A0T0Z9"/>
<dbReference type="GO" id="GO:0009507">
    <property type="term" value="C:chloroplast"/>
    <property type="evidence" value="ECO:0007669"/>
    <property type="project" value="UniProtKB-SubCell"/>
</dbReference>
<dbReference type="GO" id="GO:0005840">
    <property type="term" value="C:ribosome"/>
    <property type="evidence" value="ECO:0000318"/>
    <property type="project" value="GO_Central"/>
</dbReference>
<dbReference type="GO" id="GO:0015935">
    <property type="term" value="C:small ribosomal subunit"/>
    <property type="evidence" value="ECO:0007669"/>
    <property type="project" value="InterPro"/>
</dbReference>
<dbReference type="GO" id="GO:0003729">
    <property type="term" value="F:mRNA binding"/>
    <property type="evidence" value="ECO:0000318"/>
    <property type="project" value="GO_Central"/>
</dbReference>
<dbReference type="GO" id="GO:0019843">
    <property type="term" value="F:rRNA binding"/>
    <property type="evidence" value="ECO:0000318"/>
    <property type="project" value="GO_Central"/>
</dbReference>
<dbReference type="GO" id="GO:0003735">
    <property type="term" value="F:structural constituent of ribosome"/>
    <property type="evidence" value="ECO:0000318"/>
    <property type="project" value="GO_Central"/>
</dbReference>
<dbReference type="GO" id="GO:0000028">
    <property type="term" value="P:ribosomal small subunit assembly"/>
    <property type="evidence" value="ECO:0000318"/>
    <property type="project" value="GO_Central"/>
</dbReference>
<dbReference type="GO" id="GO:0006412">
    <property type="term" value="P:translation"/>
    <property type="evidence" value="ECO:0000318"/>
    <property type="project" value="GO_Central"/>
</dbReference>
<dbReference type="CDD" id="cd14871">
    <property type="entry name" value="uS7_Chloroplast"/>
    <property type="match status" value="1"/>
</dbReference>
<dbReference type="FunFam" id="1.10.455.10:FF:000001">
    <property type="entry name" value="30S ribosomal protein S7"/>
    <property type="match status" value="1"/>
</dbReference>
<dbReference type="Gene3D" id="1.10.455.10">
    <property type="entry name" value="Ribosomal protein S7 domain"/>
    <property type="match status" value="1"/>
</dbReference>
<dbReference type="HAMAP" id="MF_00480_B">
    <property type="entry name" value="Ribosomal_uS7_B"/>
    <property type="match status" value="1"/>
</dbReference>
<dbReference type="InterPro" id="IPR000235">
    <property type="entry name" value="Ribosomal_uS7"/>
</dbReference>
<dbReference type="InterPro" id="IPR005717">
    <property type="entry name" value="Ribosomal_uS7_bac/org-type"/>
</dbReference>
<dbReference type="InterPro" id="IPR020606">
    <property type="entry name" value="Ribosomal_uS7_CS"/>
</dbReference>
<dbReference type="InterPro" id="IPR023798">
    <property type="entry name" value="Ribosomal_uS7_dom"/>
</dbReference>
<dbReference type="InterPro" id="IPR036823">
    <property type="entry name" value="Ribosomal_uS7_dom_sf"/>
</dbReference>
<dbReference type="NCBIfam" id="TIGR01029">
    <property type="entry name" value="rpsG_bact"/>
    <property type="match status" value="1"/>
</dbReference>
<dbReference type="PANTHER" id="PTHR11205">
    <property type="entry name" value="RIBOSOMAL PROTEIN S7"/>
    <property type="match status" value="1"/>
</dbReference>
<dbReference type="Pfam" id="PF00177">
    <property type="entry name" value="Ribosomal_S7"/>
    <property type="match status" value="1"/>
</dbReference>
<dbReference type="PIRSF" id="PIRSF002122">
    <property type="entry name" value="RPS7p_RPS7a_RPS5e_RPS7o"/>
    <property type="match status" value="1"/>
</dbReference>
<dbReference type="SUPFAM" id="SSF47973">
    <property type="entry name" value="Ribosomal protein S7"/>
    <property type="match status" value="1"/>
</dbReference>
<dbReference type="PROSITE" id="PS00052">
    <property type="entry name" value="RIBOSOMAL_S7"/>
    <property type="match status" value="1"/>
</dbReference>
<proteinExistence type="inferred from homology"/>
<feature type="chain" id="PRO_0000277068" description="Small ribosomal subunit protein uS7c">
    <location>
        <begin position="1"/>
        <end position="156"/>
    </location>
</feature>
<comment type="function">
    <text evidence="1">One of the primary rRNA binding proteins, it binds directly to 16S rRNA where it nucleates assembly of the head domain of the 30S subunit.</text>
</comment>
<comment type="subunit">
    <text>Part of the 30S ribosomal subunit.</text>
</comment>
<comment type="subcellular location">
    <subcellularLocation>
        <location>Plastid</location>
        <location>Chloroplast</location>
    </subcellularLocation>
</comment>
<comment type="similarity">
    <text evidence="2">Belongs to the universal ribosomal protein uS7 family.</text>
</comment>